<dbReference type="EC" id="2.3.1.225"/>
<dbReference type="EMBL" id="AAFI02000010">
    <property type="protein sequence ID" value="EAL70693.1"/>
    <property type="molecule type" value="Genomic_DNA"/>
</dbReference>
<dbReference type="EMBL" id="AAFI02000010">
    <property type="protein sequence ID" value="EAL70733.1"/>
    <property type="molecule type" value="Genomic_DNA"/>
</dbReference>
<dbReference type="RefSeq" id="XP_644591.1">
    <property type="nucleotide sequence ID" value="XM_639499.1"/>
</dbReference>
<dbReference type="RefSeq" id="XP_644660.1">
    <property type="nucleotide sequence ID" value="XM_639568.1"/>
</dbReference>
<dbReference type="SMR" id="Q557H5"/>
<dbReference type="FunCoup" id="Q557H5">
    <property type="interactions" value="23"/>
</dbReference>
<dbReference type="GlyGen" id="Q557H5">
    <property type="glycosylation" value="9 sites"/>
</dbReference>
<dbReference type="PaxDb" id="44689-DDB0217152"/>
<dbReference type="EnsemblProtists" id="EAL70693">
    <property type="protein sequence ID" value="EAL70693"/>
    <property type="gene ID" value="DDB_G0273477"/>
</dbReference>
<dbReference type="EnsemblProtists" id="EAL70733">
    <property type="protein sequence ID" value="EAL70733"/>
    <property type="gene ID" value="DDB_G0273557"/>
</dbReference>
<dbReference type="GeneID" id="8618955"/>
<dbReference type="GeneID" id="8619022"/>
<dbReference type="KEGG" id="ddi:DDB_G0273477"/>
<dbReference type="KEGG" id="ddi:DDB_G0273557"/>
<dbReference type="dictyBase" id="DDB_G0273477"/>
<dbReference type="dictyBase" id="DDB_G0273557"/>
<dbReference type="VEuPathDB" id="AmoebaDB:DDB_G0273557"/>
<dbReference type="eggNOG" id="KOG1311">
    <property type="taxonomic scope" value="Eukaryota"/>
</dbReference>
<dbReference type="HOGENOM" id="CLU_543404_0_0_1"/>
<dbReference type="InParanoid" id="Q557H5"/>
<dbReference type="OMA" id="NFDHHCV"/>
<dbReference type="PRO" id="PR:Q557H5"/>
<dbReference type="Proteomes" id="UP000002195">
    <property type="component" value="Chromosome 2"/>
</dbReference>
<dbReference type="GO" id="GO:0005783">
    <property type="term" value="C:endoplasmic reticulum"/>
    <property type="evidence" value="ECO:0000318"/>
    <property type="project" value="GO_Central"/>
</dbReference>
<dbReference type="GO" id="GO:0005794">
    <property type="term" value="C:Golgi apparatus"/>
    <property type="evidence" value="ECO:0000318"/>
    <property type="project" value="GO_Central"/>
</dbReference>
<dbReference type="GO" id="GO:0016020">
    <property type="term" value="C:membrane"/>
    <property type="evidence" value="ECO:0007669"/>
    <property type="project" value="UniProtKB-SubCell"/>
</dbReference>
<dbReference type="GO" id="GO:0019706">
    <property type="term" value="F:protein-cysteine S-palmitoyltransferase activity"/>
    <property type="evidence" value="ECO:0000318"/>
    <property type="project" value="GO_Central"/>
</dbReference>
<dbReference type="GO" id="GO:0006612">
    <property type="term" value="P:protein targeting to membrane"/>
    <property type="evidence" value="ECO:0000318"/>
    <property type="project" value="GO_Central"/>
</dbReference>
<dbReference type="InterPro" id="IPR001594">
    <property type="entry name" value="Palmitoyltrfase_DHHC"/>
</dbReference>
<dbReference type="InterPro" id="IPR039859">
    <property type="entry name" value="PFA4/ZDH16/20/ERF2-like"/>
</dbReference>
<dbReference type="PANTHER" id="PTHR22883:SF127">
    <property type="entry name" value="ZDHHC-TYPE PALMITOYLTRANSFERASE 3-RELATED"/>
    <property type="match status" value="1"/>
</dbReference>
<dbReference type="PANTHER" id="PTHR22883">
    <property type="entry name" value="ZINC FINGER DHHC DOMAIN CONTAINING PROTEIN"/>
    <property type="match status" value="1"/>
</dbReference>
<dbReference type="Pfam" id="PF01529">
    <property type="entry name" value="DHHC"/>
    <property type="match status" value="1"/>
</dbReference>
<dbReference type="PROSITE" id="PS50216">
    <property type="entry name" value="DHHC"/>
    <property type="match status" value="1"/>
</dbReference>
<name>ZDHC3_DICDI</name>
<evidence type="ECO:0000250" key="1"/>
<evidence type="ECO:0000250" key="2">
    <source>
        <dbReference type="UniProtKB" id="Q9Y397"/>
    </source>
</evidence>
<evidence type="ECO:0000255" key="3"/>
<evidence type="ECO:0000255" key="4">
    <source>
        <dbReference type="PROSITE-ProRule" id="PRU00067"/>
    </source>
</evidence>
<evidence type="ECO:0000256" key="5">
    <source>
        <dbReference type="SAM" id="MobiDB-lite"/>
    </source>
</evidence>
<evidence type="ECO:0000305" key="6"/>
<evidence type="ECO:0000312" key="7">
    <source>
        <dbReference type="EMBL" id="EAL70693.1"/>
    </source>
</evidence>
<sequence>MVNNNNKNNKINDRENEENEKNKKKDKIYENKIGINENNNENNNYQNENFIYTSGDSNDTQEGDISEIQEESTNENNKKLKKRKIKKTKSLYFYKCVTGPDKLFFIVTQIFILVPSLFFEIKLVPISLEISKKLEISNYIITLTLLVFIFYNLYKCAFTNPGIITRNNIEESKKDKIKLTKLQATKKALKKFITSGMDEIANDDPISSSSDFSDSDDDDQDEQGGSSSARNSFENSGDFIVEMEQPTNSNNNNSNNNNNNNKNRNRNNNNNNNNNNNNKNQSKYKEIQIGDSDFKYKCKFCITCGLYREPRSFHCSTCNNCVENFDHHCVWIGNCIGRRNYREFFYFITTTLIYALYLLSMSIVFLNQIVNTTESPANKINNNNINSNSSNHNSSNDLNEKFEKSINNILYALRTTSGGLCIFIIIFGFIMSLLLGFLVSYHIRLTLSNKSTIEDFKKIFENQINPYDKGWLFNLKIKLFNFNNSNNNININNNNTNNNINS</sequence>
<gene>
    <name type="ORF">DDB_G0273477</name>
</gene>
<gene>
    <name type="ORF">DDB_G0273557</name>
</gene>
<feature type="chain" id="PRO_0000259607" description="Putative ZDHHC-type palmitoyltransferase 3">
    <location>
        <begin position="1"/>
        <end position="502"/>
    </location>
</feature>
<feature type="transmembrane region" description="Helical" evidence="3">
    <location>
        <begin position="104"/>
        <end position="124"/>
    </location>
</feature>
<feature type="transmembrane region" description="Helical" evidence="3">
    <location>
        <begin position="134"/>
        <end position="154"/>
    </location>
</feature>
<feature type="transmembrane region" description="Helical" evidence="3">
    <location>
        <begin position="344"/>
        <end position="364"/>
    </location>
</feature>
<feature type="transmembrane region" description="Helical" evidence="3">
    <location>
        <begin position="419"/>
        <end position="439"/>
    </location>
</feature>
<feature type="domain" description="DHHC" evidence="4">
    <location>
        <begin position="299"/>
        <end position="349"/>
    </location>
</feature>
<feature type="region of interest" description="Disordered" evidence="5">
    <location>
        <begin position="1"/>
        <end position="80"/>
    </location>
</feature>
<feature type="region of interest" description="Disordered" evidence="5">
    <location>
        <begin position="200"/>
        <end position="281"/>
    </location>
</feature>
<feature type="compositionally biased region" description="Basic and acidic residues" evidence="5">
    <location>
        <begin position="10"/>
        <end position="30"/>
    </location>
</feature>
<feature type="compositionally biased region" description="Low complexity" evidence="5">
    <location>
        <begin position="31"/>
        <end position="52"/>
    </location>
</feature>
<feature type="compositionally biased region" description="Acidic residues" evidence="5">
    <location>
        <begin position="59"/>
        <end position="73"/>
    </location>
</feature>
<feature type="compositionally biased region" description="Low complexity" evidence="5">
    <location>
        <begin position="203"/>
        <end position="212"/>
    </location>
</feature>
<feature type="compositionally biased region" description="Acidic residues" evidence="5">
    <location>
        <begin position="213"/>
        <end position="222"/>
    </location>
</feature>
<feature type="compositionally biased region" description="Low complexity" evidence="5">
    <location>
        <begin position="248"/>
        <end position="280"/>
    </location>
</feature>
<feature type="active site" description="S-palmitoyl cysteine intermediate" evidence="1">
    <location>
        <position position="329"/>
    </location>
</feature>
<feature type="glycosylation site" description="N-linked (GlcNAc...) asparagine" evidence="3">
    <location>
        <position position="58"/>
    </location>
</feature>
<feature type="glycosylation site" description="N-linked (GlcNAc...) asparagine" evidence="3">
    <location>
        <position position="252"/>
    </location>
</feature>
<feature type="glycosylation site" description="N-linked (GlcNAc...) asparagine" evidence="3">
    <location>
        <position position="280"/>
    </location>
</feature>
<feature type="glycosylation site" description="N-linked (GlcNAc...) asparagine" evidence="3">
    <location>
        <position position="371"/>
    </location>
</feature>
<feature type="glycosylation site" description="N-linked (GlcNAc...) asparagine" evidence="3">
    <location>
        <position position="388"/>
    </location>
</feature>
<feature type="glycosylation site" description="N-linked (GlcNAc...) asparagine" evidence="3">
    <location>
        <position position="393"/>
    </location>
</feature>
<feature type="glycosylation site" description="N-linked (GlcNAc...) asparagine" evidence="3">
    <location>
        <position position="449"/>
    </location>
</feature>
<feature type="glycosylation site" description="N-linked (GlcNAc...) asparagine" evidence="3">
    <location>
        <position position="483"/>
    </location>
</feature>
<feature type="glycosylation site" description="N-linked (GlcNAc...) asparagine" evidence="3">
    <location>
        <position position="494"/>
    </location>
</feature>
<comment type="catalytic activity">
    <reaction>
        <text>L-cysteinyl-[protein] + hexadecanoyl-CoA = S-hexadecanoyl-L-cysteinyl-[protein] + CoA</text>
        <dbReference type="Rhea" id="RHEA:36683"/>
        <dbReference type="Rhea" id="RHEA-COMP:10131"/>
        <dbReference type="Rhea" id="RHEA-COMP:11032"/>
        <dbReference type="ChEBI" id="CHEBI:29950"/>
        <dbReference type="ChEBI" id="CHEBI:57287"/>
        <dbReference type="ChEBI" id="CHEBI:57379"/>
        <dbReference type="ChEBI" id="CHEBI:74151"/>
        <dbReference type="EC" id="2.3.1.225"/>
    </reaction>
</comment>
<comment type="subcellular location">
    <subcellularLocation>
        <location evidence="3">Membrane</location>
        <topology evidence="3">Multi-pass membrane protein</topology>
    </subcellularLocation>
</comment>
<comment type="domain">
    <text evidence="2">The DHHC domain is required for palmitoyltransferase activity.</text>
</comment>
<comment type="similarity">
    <text evidence="3">Belongs to the DHHC palmitoyltransferase family.</text>
</comment>
<comment type="caution">
    <text evidence="6">The gene for this protein is duplicated in strains AX3 and AX4. These strains contain a duplication of a segment of 750 kb of chromosome 2 compared to the corresponding sequence in strain AX2.</text>
</comment>
<accession>Q557H5</accession>
<accession>Q86KJ7</accession>
<proteinExistence type="inferred from homology"/>
<keyword id="KW-0012">Acyltransferase</keyword>
<keyword id="KW-0325">Glycoprotein</keyword>
<keyword id="KW-0449">Lipoprotein</keyword>
<keyword id="KW-0472">Membrane</keyword>
<keyword id="KW-0564">Palmitate</keyword>
<keyword id="KW-1185">Reference proteome</keyword>
<keyword id="KW-0808">Transferase</keyword>
<keyword id="KW-0812">Transmembrane</keyword>
<keyword id="KW-1133">Transmembrane helix</keyword>
<organism>
    <name type="scientific">Dictyostelium discoideum</name>
    <name type="common">Social amoeba</name>
    <dbReference type="NCBI Taxonomy" id="44689"/>
    <lineage>
        <taxon>Eukaryota</taxon>
        <taxon>Amoebozoa</taxon>
        <taxon>Evosea</taxon>
        <taxon>Eumycetozoa</taxon>
        <taxon>Dictyostelia</taxon>
        <taxon>Dictyosteliales</taxon>
        <taxon>Dictyosteliaceae</taxon>
        <taxon>Dictyostelium</taxon>
    </lineage>
</organism>
<protein>
    <recommendedName>
        <fullName>Putative ZDHHC-type palmitoyltransferase 3</fullName>
        <ecNumber>2.3.1.225</ecNumber>
    </recommendedName>
    <alternativeName>
        <fullName>Zinc finger DHHC domain-containing protein 3</fullName>
    </alternativeName>
</protein>
<reference evidence="6" key="1">
    <citation type="journal article" date="2002" name="Nature">
        <title>Sequence and analysis of chromosome 2 of Dictyostelium discoideum.</title>
        <authorList>
            <person name="Gloeckner G."/>
            <person name="Eichinger L."/>
            <person name="Szafranski K."/>
            <person name="Pachebat J.A."/>
            <person name="Bankier A.T."/>
            <person name="Dear P.H."/>
            <person name="Lehmann R."/>
            <person name="Baumgart C."/>
            <person name="Parra G."/>
            <person name="Abril J.F."/>
            <person name="Guigo R."/>
            <person name="Kumpf K."/>
            <person name="Tunggal B."/>
            <person name="Cox E.C."/>
            <person name="Quail M.A."/>
            <person name="Platzer M."/>
            <person name="Rosenthal A."/>
            <person name="Noegel A.A."/>
        </authorList>
    </citation>
    <scope>NUCLEOTIDE SEQUENCE [LARGE SCALE GENOMIC DNA]</scope>
    <source>
        <strain>AX4</strain>
    </source>
</reference>
<reference evidence="6 7" key="2">
    <citation type="journal article" date="2005" name="Nature">
        <title>The genome of the social amoeba Dictyostelium discoideum.</title>
        <authorList>
            <person name="Eichinger L."/>
            <person name="Pachebat J.A."/>
            <person name="Gloeckner G."/>
            <person name="Rajandream M.A."/>
            <person name="Sucgang R."/>
            <person name="Berriman M."/>
            <person name="Song J."/>
            <person name="Olsen R."/>
            <person name="Szafranski K."/>
            <person name="Xu Q."/>
            <person name="Tunggal B."/>
            <person name="Kummerfeld S."/>
            <person name="Madera M."/>
            <person name="Konfortov B.A."/>
            <person name="Rivero F."/>
            <person name="Bankier A.T."/>
            <person name="Lehmann R."/>
            <person name="Hamlin N."/>
            <person name="Davies R."/>
            <person name="Gaudet P."/>
            <person name="Fey P."/>
            <person name="Pilcher K."/>
            <person name="Chen G."/>
            <person name="Saunders D."/>
            <person name="Sodergren E.J."/>
            <person name="Davis P."/>
            <person name="Kerhornou A."/>
            <person name="Nie X."/>
            <person name="Hall N."/>
            <person name="Anjard C."/>
            <person name="Hemphill L."/>
            <person name="Bason N."/>
            <person name="Farbrother P."/>
            <person name="Desany B."/>
            <person name="Just E."/>
            <person name="Morio T."/>
            <person name="Rost R."/>
            <person name="Churcher C.M."/>
            <person name="Cooper J."/>
            <person name="Haydock S."/>
            <person name="van Driessche N."/>
            <person name="Cronin A."/>
            <person name="Goodhead I."/>
            <person name="Muzny D.M."/>
            <person name="Mourier T."/>
            <person name="Pain A."/>
            <person name="Lu M."/>
            <person name="Harper D."/>
            <person name="Lindsay R."/>
            <person name="Hauser H."/>
            <person name="James K.D."/>
            <person name="Quiles M."/>
            <person name="Madan Babu M."/>
            <person name="Saito T."/>
            <person name="Buchrieser C."/>
            <person name="Wardroper A."/>
            <person name="Felder M."/>
            <person name="Thangavelu M."/>
            <person name="Johnson D."/>
            <person name="Knights A."/>
            <person name="Loulseged H."/>
            <person name="Mungall K.L."/>
            <person name="Oliver K."/>
            <person name="Price C."/>
            <person name="Quail M.A."/>
            <person name="Urushihara H."/>
            <person name="Hernandez J."/>
            <person name="Rabbinowitsch E."/>
            <person name="Steffen D."/>
            <person name="Sanders M."/>
            <person name="Ma J."/>
            <person name="Kohara Y."/>
            <person name="Sharp S."/>
            <person name="Simmonds M.N."/>
            <person name="Spiegler S."/>
            <person name="Tivey A."/>
            <person name="Sugano S."/>
            <person name="White B."/>
            <person name="Walker D."/>
            <person name="Woodward J.R."/>
            <person name="Winckler T."/>
            <person name="Tanaka Y."/>
            <person name="Shaulsky G."/>
            <person name="Schleicher M."/>
            <person name="Weinstock G.M."/>
            <person name="Rosenthal A."/>
            <person name="Cox E.C."/>
            <person name="Chisholm R.L."/>
            <person name="Gibbs R.A."/>
            <person name="Loomis W.F."/>
            <person name="Platzer M."/>
            <person name="Kay R.R."/>
            <person name="Williams J.G."/>
            <person name="Dear P.H."/>
            <person name="Noegel A.A."/>
            <person name="Barrell B.G."/>
            <person name="Kuspa A."/>
        </authorList>
    </citation>
    <scope>NUCLEOTIDE SEQUENCE [LARGE SCALE GENOMIC DNA]</scope>
    <source>
        <strain evidence="7">AX4</strain>
    </source>
</reference>